<protein>
    <recommendedName>
        <fullName>Histidinol-phosphate aminotransferase 2</fullName>
        <ecNumber>2.6.1.9</ecNumber>
    </recommendedName>
    <alternativeName>
        <fullName>Imidazole acetol-phosphate transaminase 2</fullName>
    </alternativeName>
</protein>
<gene>
    <name type="primary">hisC2</name>
    <name type="synonym">hisC-2</name>
    <name type="ordered locus">BA_2955</name>
    <name type="ordered locus">GBAA_2955</name>
    <name type="ordered locus">BAS2746</name>
</gene>
<evidence type="ECO:0000250" key="1"/>
<evidence type="ECO:0000256" key="2">
    <source>
        <dbReference type="SAM" id="MobiDB-lite"/>
    </source>
</evidence>
<evidence type="ECO:0000305" key="3"/>
<proteinExistence type="inferred from homology"/>
<name>HIS82_BACAN</name>
<sequence>MQVKDQLSSLQPYKPGKSPEQMKEVYGDHSFVKLASNENPFGCSPRVLDELQKSWLDHALYPDGGATTLRQTIANKLHVKMEQVLCGSGLDEVIQMISRAVLKAGDNIVTAGATFPQYRHHAIIEGCEVKEVALNNGVYDLDEISSVVDNDTKIVWICNPNNPTGTYVNDRKLTQFIEGISENTLIVIDEAYYEYVTAKDFPETLPLLEKHKNILVLRTFSKAYGLASFRVGYAVGHEELIEKLNVVRLPFNVSSLAQKAATIAFGDDEFIEEIVRVNTEGLRQYESFCKENEIPFYQSQTNFIFLPVENGGEIYEACAHAGFIIRPFPNGVRITVGTREQNEGVISVLQQHFENKKRKSRDEANA</sequence>
<organism>
    <name type="scientific">Bacillus anthracis</name>
    <dbReference type="NCBI Taxonomy" id="1392"/>
    <lineage>
        <taxon>Bacteria</taxon>
        <taxon>Bacillati</taxon>
        <taxon>Bacillota</taxon>
        <taxon>Bacilli</taxon>
        <taxon>Bacillales</taxon>
        <taxon>Bacillaceae</taxon>
        <taxon>Bacillus</taxon>
        <taxon>Bacillus cereus group</taxon>
    </lineage>
</organism>
<keyword id="KW-0028">Amino-acid biosynthesis</keyword>
<keyword id="KW-0032">Aminotransferase</keyword>
<keyword id="KW-0368">Histidine biosynthesis</keyword>
<keyword id="KW-0663">Pyridoxal phosphate</keyword>
<keyword id="KW-1185">Reference proteome</keyword>
<keyword id="KW-0808">Transferase</keyword>
<accession>Q81P62</accession>
<accession>Q6HXD4</accession>
<reference key="1">
    <citation type="journal article" date="2003" name="Nature">
        <title>The genome sequence of Bacillus anthracis Ames and comparison to closely related bacteria.</title>
        <authorList>
            <person name="Read T.D."/>
            <person name="Peterson S.N."/>
            <person name="Tourasse N.J."/>
            <person name="Baillie L.W."/>
            <person name="Paulsen I.T."/>
            <person name="Nelson K.E."/>
            <person name="Tettelin H."/>
            <person name="Fouts D.E."/>
            <person name="Eisen J.A."/>
            <person name="Gill S.R."/>
            <person name="Holtzapple E.K."/>
            <person name="Okstad O.A."/>
            <person name="Helgason E."/>
            <person name="Rilstone J."/>
            <person name="Wu M."/>
            <person name="Kolonay J.F."/>
            <person name="Beanan M.J."/>
            <person name="Dodson R.J."/>
            <person name="Brinkac L.M."/>
            <person name="Gwinn M.L."/>
            <person name="DeBoy R.T."/>
            <person name="Madpu R."/>
            <person name="Daugherty S.C."/>
            <person name="Durkin A.S."/>
            <person name="Haft D.H."/>
            <person name="Nelson W.C."/>
            <person name="Peterson J.D."/>
            <person name="Pop M."/>
            <person name="Khouri H.M."/>
            <person name="Radune D."/>
            <person name="Benton J.L."/>
            <person name="Mahamoud Y."/>
            <person name="Jiang L."/>
            <person name="Hance I.R."/>
            <person name="Weidman J.F."/>
            <person name="Berry K.J."/>
            <person name="Plaut R.D."/>
            <person name="Wolf A.M."/>
            <person name="Watkins K.L."/>
            <person name="Nierman W.C."/>
            <person name="Hazen A."/>
            <person name="Cline R.T."/>
            <person name="Redmond C."/>
            <person name="Thwaite J.E."/>
            <person name="White O."/>
            <person name="Salzberg S.L."/>
            <person name="Thomason B."/>
            <person name="Friedlander A.M."/>
            <person name="Koehler T.M."/>
            <person name="Hanna P.C."/>
            <person name="Kolstoe A.-B."/>
            <person name="Fraser C.M."/>
        </authorList>
    </citation>
    <scope>NUCLEOTIDE SEQUENCE [LARGE SCALE GENOMIC DNA]</scope>
    <source>
        <strain>Ames / isolate Porton</strain>
    </source>
</reference>
<reference key="2">
    <citation type="journal article" date="2009" name="J. Bacteriol.">
        <title>The complete genome sequence of Bacillus anthracis Ames 'Ancestor'.</title>
        <authorList>
            <person name="Ravel J."/>
            <person name="Jiang L."/>
            <person name="Stanley S.T."/>
            <person name="Wilson M.R."/>
            <person name="Decker R.S."/>
            <person name="Read T.D."/>
            <person name="Worsham P."/>
            <person name="Keim P.S."/>
            <person name="Salzberg S.L."/>
            <person name="Fraser-Liggett C.M."/>
            <person name="Rasko D.A."/>
        </authorList>
    </citation>
    <scope>NUCLEOTIDE SEQUENCE [LARGE SCALE GENOMIC DNA]</scope>
    <source>
        <strain>Ames ancestor</strain>
    </source>
</reference>
<reference key="3">
    <citation type="submission" date="2004-01" db="EMBL/GenBank/DDBJ databases">
        <title>Complete genome sequence of Bacillus anthracis Sterne.</title>
        <authorList>
            <person name="Brettin T.S."/>
            <person name="Bruce D."/>
            <person name="Challacombe J.F."/>
            <person name="Gilna P."/>
            <person name="Han C."/>
            <person name="Hill K."/>
            <person name="Hitchcock P."/>
            <person name="Jackson P."/>
            <person name="Keim P."/>
            <person name="Longmire J."/>
            <person name="Lucas S."/>
            <person name="Okinaka R."/>
            <person name="Richardson P."/>
            <person name="Rubin E."/>
            <person name="Tice H."/>
        </authorList>
    </citation>
    <scope>NUCLEOTIDE SEQUENCE [LARGE SCALE GENOMIC DNA]</scope>
    <source>
        <strain>Sterne</strain>
    </source>
</reference>
<dbReference type="EC" id="2.6.1.9"/>
<dbReference type="EMBL" id="AE016879">
    <property type="protein sequence ID" value="AAP26776.1"/>
    <property type="molecule type" value="Genomic_DNA"/>
</dbReference>
<dbReference type="EMBL" id="AE017334">
    <property type="protein sequence ID" value="AAT70137.1"/>
    <property type="molecule type" value="Genomic_DNA"/>
</dbReference>
<dbReference type="EMBL" id="AE017225">
    <property type="protein sequence ID" value="AAT55055.1"/>
    <property type="molecule type" value="Genomic_DNA"/>
</dbReference>
<dbReference type="RefSeq" id="NP_845290.1">
    <property type="nucleotide sequence ID" value="NC_003997.3"/>
</dbReference>
<dbReference type="RefSeq" id="YP_029004.1">
    <property type="nucleotide sequence ID" value="NC_005945.1"/>
</dbReference>
<dbReference type="SMR" id="Q81P62"/>
<dbReference type="STRING" id="261594.GBAA_2955"/>
<dbReference type="DNASU" id="1088520"/>
<dbReference type="GeneID" id="45022773"/>
<dbReference type="KEGG" id="ban:BA_2955"/>
<dbReference type="KEGG" id="banh:HYU01_14635"/>
<dbReference type="KEGG" id="bar:GBAA_2955"/>
<dbReference type="KEGG" id="bat:BAS2746"/>
<dbReference type="PATRIC" id="fig|198094.11.peg.2936"/>
<dbReference type="eggNOG" id="COG0079">
    <property type="taxonomic scope" value="Bacteria"/>
</dbReference>
<dbReference type="HOGENOM" id="CLU_017584_3_3_9"/>
<dbReference type="OMA" id="FAIAHEP"/>
<dbReference type="OrthoDB" id="9813612at2"/>
<dbReference type="UniPathway" id="UPA00031">
    <property type="reaction ID" value="UER00012"/>
</dbReference>
<dbReference type="Proteomes" id="UP000000427">
    <property type="component" value="Chromosome"/>
</dbReference>
<dbReference type="Proteomes" id="UP000000594">
    <property type="component" value="Chromosome"/>
</dbReference>
<dbReference type="GO" id="GO:0004400">
    <property type="term" value="F:histidinol-phosphate transaminase activity"/>
    <property type="evidence" value="ECO:0007669"/>
    <property type="project" value="UniProtKB-UniRule"/>
</dbReference>
<dbReference type="GO" id="GO:0030170">
    <property type="term" value="F:pyridoxal phosphate binding"/>
    <property type="evidence" value="ECO:0007669"/>
    <property type="project" value="InterPro"/>
</dbReference>
<dbReference type="GO" id="GO:0000105">
    <property type="term" value="P:L-histidine biosynthetic process"/>
    <property type="evidence" value="ECO:0007669"/>
    <property type="project" value="UniProtKB-UniRule"/>
</dbReference>
<dbReference type="CDD" id="cd00609">
    <property type="entry name" value="AAT_like"/>
    <property type="match status" value="1"/>
</dbReference>
<dbReference type="Gene3D" id="3.90.1150.10">
    <property type="entry name" value="Aspartate Aminotransferase, domain 1"/>
    <property type="match status" value="1"/>
</dbReference>
<dbReference type="Gene3D" id="3.40.640.10">
    <property type="entry name" value="Type I PLP-dependent aspartate aminotransferase-like (Major domain)"/>
    <property type="match status" value="1"/>
</dbReference>
<dbReference type="HAMAP" id="MF_01023">
    <property type="entry name" value="HisC_aminotrans_2"/>
    <property type="match status" value="1"/>
</dbReference>
<dbReference type="InterPro" id="IPR001917">
    <property type="entry name" value="Aminotrans_II_pyridoxalP_BS"/>
</dbReference>
<dbReference type="InterPro" id="IPR004839">
    <property type="entry name" value="Aminotransferase_I/II_large"/>
</dbReference>
<dbReference type="InterPro" id="IPR005861">
    <property type="entry name" value="HisP_aminotrans"/>
</dbReference>
<dbReference type="InterPro" id="IPR050106">
    <property type="entry name" value="HistidinolP_aminotransfase"/>
</dbReference>
<dbReference type="InterPro" id="IPR015424">
    <property type="entry name" value="PyrdxlP-dep_Trfase"/>
</dbReference>
<dbReference type="InterPro" id="IPR015421">
    <property type="entry name" value="PyrdxlP-dep_Trfase_major"/>
</dbReference>
<dbReference type="InterPro" id="IPR015422">
    <property type="entry name" value="PyrdxlP-dep_Trfase_small"/>
</dbReference>
<dbReference type="NCBIfam" id="TIGR01141">
    <property type="entry name" value="hisC"/>
    <property type="match status" value="1"/>
</dbReference>
<dbReference type="PANTHER" id="PTHR43643:SF3">
    <property type="entry name" value="HISTIDINOL-PHOSPHATE AMINOTRANSFERASE"/>
    <property type="match status" value="1"/>
</dbReference>
<dbReference type="PANTHER" id="PTHR43643">
    <property type="entry name" value="HISTIDINOL-PHOSPHATE AMINOTRANSFERASE 2"/>
    <property type="match status" value="1"/>
</dbReference>
<dbReference type="Pfam" id="PF00155">
    <property type="entry name" value="Aminotran_1_2"/>
    <property type="match status" value="1"/>
</dbReference>
<dbReference type="SUPFAM" id="SSF53383">
    <property type="entry name" value="PLP-dependent transferases"/>
    <property type="match status" value="1"/>
</dbReference>
<dbReference type="PROSITE" id="PS00599">
    <property type="entry name" value="AA_TRANSFER_CLASS_2"/>
    <property type="match status" value="1"/>
</dbReference>
<comment type="catalytic activity">
    <reaction>
        <text>L-histidinol phosphate + 2-oxoglutarate = 3-(imidazol-4-yl)-2-oxopropyl phosphate + L-glutamate</text>
        <dbReference type="Rhea" id="RHEA:23744"/>
        <dbReference type="ChEBI" id="CHEBI:16810"/>
        <dbReference type="ChEBI" id="CHEBI:29985"/>
        <dbReference type="ChEBI" id="CHEBI:57766"/>
        <dbReference type="ChEBI" id="CHEBI:57980"/>
        <dbReference type="EC" id="2.6.1.9"/>
    </reaction>
</comment>
<comment type="cofactor">
    <cofactor evidence="1">
        <name>pyridoxal 5'-phosphate</name>
        <dbReference type="ChEBI" id="CHEBI:597326"/>
    </cofactor>
</comment>
<comment type="pathway">
    <text>Amino-acid biosynthesis; L-histidine biosynthesis; L-histidine from 5-phospho-alpha-D-ribose 1-diphosphate: step 7/9.</text>
</comment>
<comment type="subunit">
    <text evidence="1">Homodimer.</text>
</comment>
<comment type="similarity">
    <text evidence="3">Belongs to the class-II pyridoxal-phosphate-dependent aminotransferase family. Histidinol-phosphate aminotransferase subfamily.</text>
</comment>
<feature type="chain" id="PRO_0000153298" description="Histidinol-phosphate aminotransferase 2">
    <location>
        <begin position="1"/>
        <end position="366"/>
    </location>
</feature>
<feature type="region of interest" description="Disordered" evidence="2">
    <location>
        <begin position="1"/>
        <end position="21"/>
    </location>
</feature>
<feature type="compositionally biased region" description="Polar residues" evidence="2">
    <location>
        <begin position="1"/>
        <end position="11"/>
    </location>
</feature>
<feature type="modified residue" description="N6-(pyridoxal phosphate)lysine" evidence="1">
    <location>
        <position position="222"/>
    </location>
</feature>